<name>TBA2_HOMAM</name>
<evidence type="ECO:0000250" key="1"/>
<evidence type="ECO:0000250" key="2">
    <source>
        <dbReference type="UniProtKB" id="P68363"/>
    </source>
</evidence>
<evidence type="ECO:0000256" key="3">
    <source>
        <dbReference type="SAM" id="MobiDB-lite"/>
    </source>
</evidence>
<evidence type="ECO:0000305" key="4"/>
<feature type="chain" id="PRO_0000048180" description="Tubulin alpha-2 chain">
    <location>
        <begin position="1"/>
        <end position="451"/>
    </location>
</feature>
<feature type="region of interest" description="Disordered" evidence="3">
    <location>
        <begin position="432"/>
        <end position="451"/>
    </location>
</feature>
<feature type="active site" evidence="2">
    <location>
        <position position="254"/>
    </location>
</feature>
<feature type="binding site" evidence="2">
    <location>
        <position position="11"/>
    </location>
    <ligand>
        <name>GTP</name>
        <dbReference type="ChEBI" id="CHEBI:37565"/>
    </ligand>
</feature>
<feature type="binding site" evidence="2">
    <location>
        <position position="71"/>
    </location>
    <ligand>
        <name>GTP</name>
        <dbReference type="ChEBI" id="CHEBI:37565"/>
    </ligand>
</feature>
<feature type="binding site" evidence="2">
    <location>
        <position position="71"/>
    </location>
    <ligand>
        <name>Mg(2+)</name>
        <dbReference type="ChEBI" id="CHEBI:18420"/>
    </ligand>
</feature>
<feature type="binding site" evidence="2">
    <location>
        <position position="140"/>
    </location>
    <ligand>
        <name>GTP</name>
        <dbReference type="ChEBI" id="CHEBI:37565"/>
    </ligand>
</feature>
<feature type="binding site" evidence="2">
    <location>
        <position position="144"/>
    </location>
    <ligand>
        <name>GTP</name>
        <dbReference type="ChEBI" id="CHEBI:37565"/>
    </ligand>
</feature>
<feature type="binding site" evidence="2">
    <location>
        <position position="145"/>
    </location>
    <ligand>
        <name>GTP</name>
        <dbReference type="ChEBI" id="CHEBI:37565"/>
    </ligand>
</feature>
<feature type="binding site" evidence="2">
    <location>
        <position position="179"/>
    </location>
    <ligand>
        <name>GTP</name>
        <dbReference type="ChEBI" id="CHEBI:37565"/>
    </ligand>
</feature>
<feature type="binding site" evidence="2">
    <location>
        <position position="206"/>
    </location>
    <ligand>
        <name>GTP</name>
        <dbReference type="ChEBI" id="CHEBI:37565"/>
    </ligand>
</feature>
<feature type="binding site" evidence="2">
    <location>
        <position position="228"/>
    </location>
    <ligand>
        <name>GTP</name>
        <dbReference type="ChEBI" id="CHEBI:37565"/>
    </ligand>
</feature>
<feature type="site" description="Involved in polymerization">
    <location>
        <position position="451"/>
    </location>
</feature>
<feature type="modified residue" description="N6-acetyllysine" evidence="1">
    <location>
        <position position="40"/>
    </location>
</feature>
<proteinExistence type="evidence at transcript level"/>
<reference key="1">
    <citation type="journal article" date="1996" name="Gene">
        <title>Multiple lobster tubulin isoforms are encoded by a simple gene family.</title>
        <authorList>
            <person name="Demers D.M."/>
            <person name="Metcalf A.E."/>
            <person name="Talbot P."/>
            <person name="Hyman B.C."/>
        </authorList>
    </citation>
    <scope>NUCLEOTIDE SEQUENCE [MRNA]</scope>
</reference>
<keyword id="KW-0007">Acetylation</keyword>
<keyword id="KW-0963">Cytoplasm</keyword>
<keyword id="KW-0206">Cytoskeleton</keyword>
<keyword id="KW-0342">GTP-binding</keyword>
<keyword id="KW-0378">Hydrolase</keyword>
<keyword id="KW-0460">Magnesium</keyword>
<keyword id="KW-0479">Metal-binding</keyword>
<keyword id="KW-0493">Microtubule</keyword>
<keyword id="KW-0547">Nucleotide-binding</keyword>
<accession>Q94570</accession>
<comment type="function">
    <text>Tubulin is the major constituent of microtubules, a cylinder consisting of laterally associated linear protofilaments composed of alpha- and beta-tubulin heterodimers. Microtubules grow by the addition of GTP-tubulin dimers to the microtubule end, where a stabilizing cap forms. Below the cap, tubulin dimers are in GDP-bound state, owing to GTPase activity of alpha-tubulin.</text>
</comment>
<comment type="catalytic activity">
    <reaction evidence="2">
        <text>GTP + H2O = GDP + phosphate + H(+)</text>
        <dbReference type="Rhea" id="RHEA:19669"/>
        <dbReference type="ChEBI" id="CHEBI:15377"/>
        <dbReference type="ChEBI" id="CHEBI:15378"/>
        <dbReference type="ChEBI" id="CHEBI:37565"/>
        <dbReference type="ChEBI" id="CHEBI:43474"/>
        <dbReference type="ChEBI" id="CHEBI:58189"/>
    </reaction>
    <physiologicalReaction direction="left-to-right" evidence="2">
        <dbReference type="Rhea" id="RHEA:19670"/>
    </physiologicalReaction>
</comment>
<comment type="cofactor">
    <cofactor evidence="2">
        <name>Mg(2+)</name>
        <dbReference type="ChEBI" id="CHEBI:18420"/>
    </cofactor>
</comment>
<comment type="subunit">
    <text>Dimer of alpha and beta chains. A typical microtubule is a hollow water-filled tube with an outer diameter of 25 nm and an inner diameter of 15 nM. Alpha-beta heterodimers associate head-to-tail to form protofilaments running lengthwise along the microtubule wall with the beta-tubulin subunit facing the microtubule plus end conferring a structural polarity. Microtubules usually have 13 protofilaments but different protofilament numbers can be found in some organisms and specialized cells.</text>
</comment>
<comment type="subcellular location">
    <subcellularLocation>
        <location>Cytoplasm</location>
        <location>Cytoskeleton</location>
    </subcellularLocation>
</comment>
<comment type="PTM">
    <text evidence="1">Undergoes a tyrosination/detyrosination cycle, the cyclic removal and re-addition of a C-terminal tyrosine residue by the enzymes tubulin tyrosine carboxypeptidase (TTCP) and tubulin tyrosine ligase (TTL), respectively.</text>
</comment>
<comment type="PTM">
    <text evidence="1">Acetylation of alpha chains at Lys-40 stabilizes microtubules and affects affinity and processivity of microtubule motors. This modification has a role in multiple cellular functions, ranging from cell motility, cell cycle progression or cell differentiation to intracellular trafficking and signaling (By similarity).</text>
</comment>
<comment type="similarity">
    <text evidence="4">Belongs to the tubulin family.</text>
</comment>
<organism>
    <name type="scientific">Homarus americanus</name>
    <name type="common">American lobster</name>
    <dbReference type="NCBI Taxonomy" id="6706"/>
    <lineage>
        <taxon>Eukaryota</taxon>
        <taxon>Metazoa</taxon>
        <taxon>Ecdysozoa</taxon>
        <taxon>Arthropoda</taxon>
        <taxon>Crustacea</taxon>
        <taxon>Multicrustacea</taxon>
        <taxon>Malacostraca</taxon>
        <taxon>Eumalacostraca</taxon>
        <taxon>Eucarida</taxon>
        <taxon>Decapoda</taxon>
        <taxon>Pleocyemata</taxon>
        <taxon>Astacidea</taxon>
        <taxon>Nephropoidea</taxon>
        <taxon>Nephropidae</taxon>
        <taxon>Homarus</taxon>
    </lineage>
</organism>
<protein>
    <recommendedName>
        <fullName>Tubulin alpha-2 chain</fullName>
        <ecNumber evidence="2">3.6.5.-</ecNumber>
    </recommendedName>
    <alternativeName>
        <fullName>Alpha-II tubulin</fullName>
    </alternativeName>
</protein>
<sequence>MRECISIHVGQAGVQMGNSCWELYCLEHGIQPDGQMPSDKTVGVCNDSFNTFFTETGSGKHVPRAVFVDLEPSVIDEVRSGIYRQLFHPEQLISGKEDAANNYARGHYTIGKEYVDIVLDRIRKLADQCTGLQGFLIFRSFGGGTGSGFASLLMERLSVEYGKKSKLEIAIYPAPQSATSVVEPYNSILTTHTTLEHSDCCFMVDNEAIFDICQRNLDVSRPTYTNLNRLIGQIVSSITASLRFEGALNVDLTEFQTNLVPYPRIHFPLTTYSPIISAEKAYHEQLSVGEITSACFEPANQMVKCDPRHGKYMACCLLYRGDVVPKDVTASIANVKTKRTIQFVDWCPTGFKVGINYQPPTVVPGADLAKVSRAVCMLSNTTAIAEAWARLDHKVDLMYAKRAFVHWYVGEGMEERQFSEAREDLATLEKDYEEVGIDTADGEDDEEANDY</sequence>
<dbReference type="EC" id="3.6.5.-" evidence="2"/>
<dbReference type="EMBL" id="U66318">
    <property type="protein sequence ID" value="AAB07481.1"/>
    <property type="molecule type" value="mRNA"/>
</dbReference>
<dbReference type="SMR" id="Q94570"/>
<dbReference type="OrthoDB" id="1662883at2759"/>
<dbReference type="GO" id="GO:0005737">
    <property type="term" value="C:cytoplasm"/>
    <property type="evidence" value="ECO:0007669"/>
    <property type="project" value="UniProtKB-KW"/>
</dbReference>
<dbReference type="GO" id="GO:0005874">
    <property type="term" value="C:microtubule"/>
    <property type="evidence" value="ECO:0007669"/>
    <property type="project" value="UniProtKB-KW"/>
</dbReference>
<dbReference type="GO" id="GO:0005525">
    <property type="term" value="F:GTP binding"/>
    <property type="evidence" value="ECO:0007669"/>
    <property type="project" value="UniProtKB-KW"/>
</dbReference>
<dbReference type="GO" id="GO:0016787">
    <property type="term" value="F:hydrolase activity"/>
    <property type="evidence" value="ECO:0007669"/>
    <property type="project" value="UniProtKB-KW"/>
</dbReference>
<dbReference type="GO" id="GO:0046872">
    <property type="term" value="F:metal ion binding"/>
    <property type="evidence" value="ECO:0007669"/>
    <property type="project" value="UniProtKB-KW"/>
</dbReference>
<dbReference type="GO" id="GO:0005200">
    <property type="term" value="F:structural constituent of cytoskeleton"/>
    <property type="evidence" value="ECO:0007669"/>
    <property type="project" value="InterPro"/>
</dbReference>
<dbReference type="GO" id="GO:0007017">
    <property type="term" value="P:microtubule-based process"/>
    <property type="evidence" value="ECO:0007669"/>
    <property type="project" value="InterPro"/>
</dbReference>
<dbReference type="CDD" id="cd02186">
    <property type="entry name" value="alpha_tubulin"/>
    <property type="match status" value="1"/>
</dbReference>
<dbReference type="FunFam" id="1.10.287.600:FF:000005">
    <property type="entry name" value="Tubulin alpha chain"/>
    <property type="match status" value="1"/>
</dbReference>
<dbReference type="FunFam" id="3.30.1330.20:FF:000001">
    <property type="entry name" value="Tubulin alpha chain"/>
    <property type="match status" value="1"/>
</dbReference>
<dbReference type="FunFam" id="3.40.50.1440:FF:000002">
    <property type="entry name" value="Tubulin alpha chain"/>
    <property type="match status" value="1"/>
</dbReference>
<dbReference type="Gene3D" id="1.10.287.600">
    <property type="entry name" value="Helix hairpin bin"/>
    <property type="match status" value="1"/>
</dbReference>
<dbReference type="Gene3D" id="3.30.1330.20">
    <property type="entry name" value="Tubulin/FtsZ, C-terminal domain"/>
    <property type="match status" value="1"/>
</dbReference>
<dbReference type="Gene3D" id="3.40.50.1440">
    <property type="entry name" value="Tubulin/FtsZ, GTPase domain"/>
    <property type="match status" value="1"/>
</dbReference>
<dbReference type="InterPro" id="IPR002452">
    <property type="entry name" value="Alpha_tubulin"/>
</dbReference>
<dbReference type="InterPro" id="IPR008280">
    <property type="entry name" value="Tub_FtsZ_C"/>
</dbReference>
<dbReference type="InterPro" id="IPR000217">
    <property type="entry name" value="Tubulin"/>
</dbReference>
<dbReference type="InterPro" id="IPR037103">
    <property type="entry name" value="Tubulin/FtsZ-like_C"/>
</dbReference>
<dbReference type="InterPro" id="IPR018316">
    <property type="entry name" value="Tubulin/FtsZ_2-layer-sand-dom"/>
</dbReference>
<dbReference type="InterPro" id="IPR036525">
    <property type="entry name" value="Tubulin/FtsZ_GTPase_sf"/>
</dbReference>
<dbReference type="InterPro" id="IPR023123">
    <property type="entry name" value="Tubulin_C"/>
</dbReference>
<dbReference type="InterPro" id="IPR017975">
    <property type="entry name" value="Tubulin_CS"/>
</dbReference>
<dbReference type="InterPro" id="IPR003008">
    <property type="entry name" value="Tubulin_FtsZ_GTPase"/>
</dbReference>
<dbReference type="PANTHER" id="PTHR11588">
    <property type="entry name" value="TUBULIN"/>
    <property type="match status" value="1"/>
</dbReference>
<dbReference type="Pfam" id="PF00091">
    <property type="entry name" value="Tubulin"/>
    <property type="match status" value="1"/>
</dbReference>
<dbReference type="Pfam" id="PF03953">
    <property type="entry name" value="Tubulin_C"/>
    <property type="match status" value="1"/>
</dbReference>
<dbReference type="PRINTS" id="PR01162">
    <property type="entry name" value="ALPHATUBULIN"/>
</dbReference>
<dbReference type="PRINTS" id="PR01161">
    <property type="entry name" value="TUBULIN"/>
</dbReference>
<dbReference type="SMART" id="SM00864">
    <property type="entry name" value="Tubulin"/>
    <property type="match status" value="1"/>
</dbReference>
<dbReference type="SMART" id="SM00865">
    <property type="entry name" value="Tubulin_C"/>
    <property type="match status" value="1"/>
</dbReference>
<dbReference type="SUPFAM" id="SSF55307">
    <property type="entry name" value="Tubulin C-terminal domain-like"/>
    <property type="match status" value="1"/>
</dbReference>
<dbReference type="SUPFAM" id="SSF52490">
    <property type="entry name" value="Tubulin nucleotide-binding domain-like"/>
    <property type="match status" value="1"/>
</dbReference>
<dbReference type="PROSITE" id="PS00227">
    <property type="entry name" value="TUBULIN"/>
    <property type="match status" value="1"/>
</dbReference>